<reference key="1">
    <citation type="submission" date="2004-11" db="EMBL/GenBank/DDBJ databases">
        <authorList>
            <consortium name="The German cDNA consortium"/>
        </authorList>
    </citation>
    <scope>NUCLEOTIDE SEQUENCE [LARGE SCALE MRNA]</scope>
    <source>
        <tissue>Heart</tissue>
    </source>
</reference>
<comment type="function">
    <text evidence="1 2">Component of the signal peptidase complex (SPC) which catalyzes the cleavage of N-terminal signal sequences from nascent proteins as they are translocated into the lumen of the endoplasmic reticulum (By similarity). Enhances the enzymatic activity of SPC and facilitates the interactions between different components of the translocation site (By similarity).</text>
</comment>
<comment type="subunit">
    <text evidence="2">Component of the signal peptidase complex paralog A (SPC-A) composed of a catalytic subunit SEC11A and three accessory subunits SPCS1, SPCS2 and SPCS3. Component of the signal peptidase complex paralog C (SPC-C) composed of a catalytic subunit SEC11C and three accessory subunits SPCS1, SPCS2 and SPCS3. Within the complex, interacts with SEC11A or SEC11C and SPCS1. The complex induces a local thinning of the ER membrane which is used to measure the length of the signal peptide (SP) h-region of protein substrates. This ensures the selectivity of the complex towards h-regions shorter than 18-20 amino acids.</text>
</comment>
<comment type="subcellular location">
    <subcellularLocation>
        <location evidence="3">Endoplasmic reticulum membrane</location>
        <topology evidence="3">Multi-pass membrane protein</topology>
    </subcellularLocation>
</comment>
<comment type="similarity">
    <text evidence="5">Belongs to the SPCS2 family.</text>
</comment>
<name>SPCS2_PONAB</name>
<gene>
    <name type="primary">SPCS2</name>
</gene>
<dbReference type="EMBL" id="CR858875">
    <property type="protein sequence ID" value="CAH91074.1"/>
    <property type="molecule type" value="mRNA"/>
</dbReference>
<dbReference type="RefSeq" id="NP_001125623.1">
    <property type="nucleotide sequence ID" value="NM_001132151.1"/>
</dbReference>
<dbReference type="RefSeq" id="XP_054379691.1">
    <property type="nucleotide sequence ID" value="XM_054523716.2"/>
</dbReference>
<dbReference type="SMR" id="Q5RAY6"/>
<dbReference type="FunCoup" id="Q5RAY6">
    <property type="interactions" value="2374"/>
</dbReference>
<dbReference type="STRING" id="9601.ENSPPYP00000004206"/>
<dbReference type="Ensembl" id="ENSPPYT00000004378.3">
    <property type="protein sequence ID" value="ENSPPYP00000004206.2"/>
    <property type="gene ID" value="ENSPPYG00000003682.3"/>
</dbReference>
<dbReference type="GeneID" id="100172541"/>
<dbReference type="KEGG" id="pon:100172541"/>
<dbReference type="CTD" id="9789"/>
<dbReference type="eggNOG" id="KOG4072">
    <property type="taxonomic scope" value="Eukaryota"/>
</dbReference>
<dbReference type="GeneTree" id="ENSGT00440000038181"/>
<dbReference type="HOGENOM" id="CLU_094622_1_0_1"/>
<dbReference type="InParanoid" id="Q5RAY6"/>
<dbReference type="OrthoDB" id="29558at2759"/>
<dbReference type="TreeFam" id="TF314545"/>
<dbReference type="Proteomes" id="UP000001595">
    <property type="component" value="Chromosome 11"/>
</dbReference>
<dbReference type="GO" id="GO:0005787">
    <property type="term" value="C:signal peptidase complex"/>
    <property type="evidence" value="ECO:0007669"/>
    <property type="project" value="InterPro"/>
</dbReference>
<dbReference type="GO" id="GO:0045047">
    <property type="term" value="P:protein targeting to ER"/>
    <property type="evidence" value="ECO:0007669"/>
    <property type="project" value="TreeGrafter"/>
</dbReference>
<dbReference type="GO" id="GO:0006465">
    <property type="term" value="P:signal peptide processing"/>
    <property type="evidence" value="ECO:0007669"/>
    <property type="project" value="InterPro"/>
</dbReference>
<dbReference type="InterPro" id="IPR009582">
    <property type="entry name" value="Spc2/SPCS2"/>
</dbReference>
<dbReference type="PANTHER" id="PTHR13085">
    <property type="entry name" value="MICROSOMAL SIGNAL PEPTIDASE 25 KDA SUBUNIT"/>
    <property type="match status" value="1"/>
</dbReference>
<dbReference type="PANTHER" id="PTHR13085:SF0">
    <property type="entry name" value="SIGNAL PEPTIDASE COMPLEX SUBUNIT 2"/>
    <property type="match status" value="1"/>
</dbReference>
<dbReference type="Pfam" id="PF06703">
    <property type="entry name" value="SPC25"/>
    <property type="match status" value="1"/>
</dbReference>
<protein>
    <recommendedName>
        <fullName>Signal peptidase complex subunit 2</fullName>
    </recommendedName>
    <alternativeName>
        <fullName>Microsomal signal peptidase 25 kDa subunit</fullName>
        <shortName>SPase 25 kDa subunit</shortName>
    </alternativeName>
</protein>
<sequence length="226" mass="25027">MAAAAAQGGRSGGIGGCIGAGGASNCGTGSGRSGLLDKWKIDDKPVKIDKWDGSAVKNSLDDSAKKVLLEKYKYVENFGLIDGRLTICTISCFFAIVALIWDYMHPFPESKPVLALCVISYFVMMGILTIYTSYKEKSIFLVAHRKDPTGMDPDDIWQLSSSLKRFDDKYTLKLTFISGRTKQQREAEFTKSIAKFFDHSGTLVMDAYEPEISRLHDSLAIERKIK</sequence>
<organism>
    <name type="scientific">Pongo abelii</name>
    <name type="common">Sumatran orangutan</name>
    <name type="synonym">Pongo pygmaeus abelii</name>
    <dbReference type="NCBI Taxonomy" id="9601"/>
    <lineage>
        <taxon>Eukaryota</taxon>
        <taxon>Metazoa</taxon>
        <taxon>Chordata</taxon>
        <taxon>Craniata</taxon>
        <taxon>Vertebrata</taxon>
        <taxon>Euteleostomi</taxon>
        <taxon>Mammalia</taxon>
        <taxon>Eutheria</taxon>
        <taxon>Euarchontoglires</taxon>
        <taxon>Primates</taxon>
        <taxon>Haplorrhini</taxon>
        <taxon>Catarrhini</taxon>
        <taxon>Hominidae</taxon>
        <taxon>Pongo</taxon>
    </lineage>
</organism>
<accession>Q5RAY6</accession>
<keyword id="KW-0007">Acetylation</keyword>
<keyword id="KW-0256">Endoplasmic reticulum</keyword>
<keyword id="KW-0472">Membrane</keyword>
<keyword id="KW-1185">Reference proteome</keyword>
<keyword id="KW-0812">Transmembrane</keyword>
<keyword id="KW-1133">Transmembrane helix</keyword>
<evidence type="ECO:0000250" key="1">
    <source>
        <dbReference type="UniProtKB" id="Q04969"/>
    </source>
</evidence>
<evidence type="ECO:0000250" key="2">
    <source>
        <dbReference type="UniProtKB" id="Q15005"/>
    </source>
</evidence>
<evidence type="ECO:0000250" key="3">
    <source>
        <dbReference type="UniProtKB" id="Q28250"/>
    </source>
</evidence>
<evidence type="ECO:0000255" key="4"/>
<evidence type="ECO:0000305" key="5"/>
<feature type="initiator methionine" description="Removed" evidence="2">
    <location>
        <position position="1"/>
    </location>
</feature>
<feature type="chain" id="PRO_0000221161" description="Signal peptidase complex subunit 2">
    <location>
        <begin position="2"/>
        <end position="226"/>
    </location>
</feature>
<feature type="topological domain" description="Cytoplasmic" evidence="3">
    <location>
        <begin position="2"/>
        <end position="86"/>
    </location>
</feature>
<feature type="transmembrane region" description="Helical" evidence="4">
    <location>
        <begin position="87"/>
        <end position="107"/>
    </location>
</feature>
<feature type="topological domain" description="Lumenal" evidence="3">
    <location>
        <begin position="108"/>
        <end position="111"/>
    </location>
</feature>
<feature type="transmembrane region" description="Helical" evidence="4">
    <location>
        <begin position="112"/>
        <end position="132"/>
    </location>
</feature>
<feature type="topological domain" description="Cytoplasmic" evidence="3">
    <location>
        <begin position="133"/>
        <end position="226"/>
    </location>
</feature>
<feature type="modified residue" description="N-acetylalanine" evidence="2">
    <location>
        <position position="2"/>
    </location>
</feature>
<feature type="modified residue" description="N6-acetyllysine" evidence="2">
    <location>
        <position position="169"/>
    </location>
</feature>
<feature type="modified residue" description="N6-acetyllysine" evidence="2">
    <location>
        <position position="191"/>
    </location>
</feature>
<proteinExistence type="evidence at transcript level"/>